<protein>
    <recommendedName>
        <fullName>Arginine repressor</fullName>
    </recommendedName>
</protein>
<dbReference type="EMBL" id="LT708304">
    <property type="protein sequence ID" value="SIU00288.1"/>
    <property type="molecule type" value="Genomic_DNA"/>
</dbReference>
<dbReference type="RefSeq" id="NP_855337.1">
    <property type="nucleotide sequence ID" value="NC_002945.3"/>
</dbReference>
<dbReference type="RefSeq" id="WP_003408178.1">
    <property type="nucleotide sequence ID" value="NC_002945.4"/>
</dbReference>
<dbReference type="SMR" id="P0A4Y9"/>
<dbReference type="KEGG" id="mbo:BQ2027_MB1685"/>
<dbReference type="PATRIC" id="fig|233413.5.peg.1838"/>
<dbReference type="UniPathway" id="UPA00068"/>
<dbReference type="Proteomes" id="UP000001419">
    <property type="component" value="Chromosome"/>
</dbReference>
<dbReference type="GO" id="GO:0005737">
    <property type="term" value="C:cytoplasm"/>
    <property type="evidence" value="ECO:0007669"/>
    <property type="project" value="UniProtKB-SubCell"/>
</dbReference>
<dbReference type="GO" id="GO:0034618">
    <property type="term" value="F:arginine binding"/>
    <property type="evidence" value="ECO:0007669"/>
    <property type="project" value="InterPro"/>
</dbReference>
<dbReference type="GO" id="GO:0003677">
    <property type="term" value="F:DNA binding"/>
    <property type="evidence" value="ECO:0007669"/>
    <property type="project" value="UniProtKB-KW"/>
</dbReference>
<dbReference type="GO" id="GO:0003700">
    <property type="term" value="F:DNA-binding transcription factor activity"/>
    <property type="evidence" value="ECO:0007669"/>
    <property type="project" value="UniProtKB-UniRule"/>
</dbReference>
<dbReference type="GO" id="GO:0006526">
    <property type="term" value="P:L-arginine biosynthetic process"/>
    <property type="evidence" value="ECO:0007669"/>
    <property type="project" value="UniProtKB-UniPathway"/>
</dbReference>
<dbReference type="GO" id="GO:0051259">
    <property type="term" value="P:protein complex oligomerization"/>
    <property type="evidence" value="ECO:0007669"/>
    <property type="project" value="InterPro"/>
</dbReference>
<dbReference type="GO" id="GO:1900079">
    <property type="term" value="P:regulation of arginine biosynthetic process"/>
    <property type="evidence" value="ECO:0007669"/>
    <property type="project" value="UniProtKB-UniRule"/>
</dbReference>
<dbReference type="FunFam" id="1.10.10.10:FF:000667">
    <property type="entry name" value="Arginine repressor"/>
    <property type="match status" value="1"/>
</dbReference>
<dbReference type="FunFam" id="3.30.1360.40:FF:000006">
    <property type="entry name" value="Arginine repressor"/>
    <property type="match status" value="1"/>
</dbReference>
<dbReference type="Gene3D" id="3.30.1360.40">
    <property type="match status" value="1"/>
</dbReference>
<dbReference type="Gene3D" id="1.10.10.10">
    <property type="entry name" value="Winged helix-like DNA-binding domain superfamily/Winged helix DNA-binding domain"/>
    <property type="match status" value="1"/>
</dbReference>
<dbReference type="HAMAP" id="MF_00173">
    <property type="entry name" value="Arg_repressor"/>
    <property type="match status" value="1"/>
</dbReference>
<dbReference type="InterPro" id="IPR001669">
    <property type="entry name" value="Arg_repress"/>
</dbReference>
<dbReference type="InterPro" id="IPR020899">
    <property type="entry name" value="Arg_repress_C"/>
</dbReference>
<dbReference type="InterPro" id="IPR036251">
    <property type="entry name" value="Arg_repress_C_sf"/>
</dbReference>
<dbReference type="InterPro" id="IPR020900">
    <property type="entry name" value="Arg_repress_DNA-bd"/>
</dbReference>
<dbReference type="InterPro" id="IPR036388">
    <property type="entry name" value="WH-like_DNA-bd_sf"/>
</dbReference>
<dbReference type="InterPro" id="IPR036390">
    <property type="entry name" value="WH_DNA-bd_sf"/>
</dbReference>
<dbReference type="NCBIfam" id="TIGR01529">
    <property type="entry name" value="argR_whole"/>
    <property type="match status" value="1"/>
</dbReference>
<dbReference type="NCBIfam" id="NF002880">
    <property type="entry name" value="PRK03341.1"/>
    <property type="match status" value="1"/>
</dbReference>
<dbReference type="PANTHER" id="PTHR34471">
    <property type="entry name" value="ARGININE REPRESSOR"/>
    <property type="match status" value="1"/>
</dbReference>
<dbReference type="PANTHER" id="PTHR34471:SF1">
    <property type="entry name" value="ARGININE REPRESSOR"/>
    <property type="match status" value="1"/>
</dbReference>
<dbReference type="Pfam" id="PF01316">
    <property type="entry name" value="Arg_repressor"/>
    <property type="match status" value="1"/>
</dbReference>
<dbReference type="Pfam" id="PF02863">
    <property type="entry name" value="Arg_repressor_C"/>
    <property type="match status" value="1"/>
</dbReference>
<dbReference type="PRINTS" id="PR01467">
    <property type="entry name" value="ARGREPRESSOR"/>
</dbReference>
<dbReference type="SUPFAM" id="SSF55252">
    <property type="entry name" value="C-terminal domain of arginine repressor"/>
    <property type="match status" value="1"/>
</dbReference>
<dbReference type="SUPFAM" id="SSF46785">
    <property type="entry name" value="Winged helix' DNA-binding domain"/>
    <property type="match status" value="1"/>
</dbReference>
<reference key="1">
    <citation type="journal article" date="2003" name="Proc. Natl. Acad. Sci. U.S.A.">
        <title>The complete genome sequence of Mycobacterium bovis.</title>
        <authorList>
            <person name="Garnier T."/>
            <person name="Eiglmeier K."/>
            <person name="Camus J.-C."/>
            <person name="Medina N."/>
            <person name="Mansoor H."/>
            <person name="Pryor M."/>
            <person name="Duthoy S."/>
            <person name="Grondin S."/>
            <person name="Lacroix C."/>
            <person name="Monsempe C."/>
            <person name="Simon S."/>
            <person name="Harris B."/>
            <person name="Atkin R."/>
            <person name="Doggett J."/>
            <person name="Mayes R."/>
            <person name="Keating L."/>
            <person name="Wheeler P.R."/>
            <person name="Parkhill J."/>
            <person name="Barrell B.G."/>
            <person name="Cole S.T."/>
            <person name="Gordon S.V."/>
            <person name="Hewinson R.G."/>
        </authorList>
    </citation>
    <scope>NUCLEOTIDE SEQUENCE [LARGE SCALE GENOMIC DNA]</scope>
    <source>
        <strain>ATCC BAA-935 / AF2122/97</strain>
    </source>
</reference>
<reference key="2">
    <citation type="journal article" date="2017" name="Genome Announc.">
        <title>Updated reference genome sequence and annotation of Mycobacterium bovis AF2122/97.</title>
        <authorList>
            <person name="Malone K.M."/>
            <person name="Farrell D."/>
            <person name="Stuber T.P."/>
            <person name="Schubert O.T."/>
            <person name="Aebersold R."/>
            <person name="Robbe-Austerman S."/>
            <person name="Gordon S.V."/>
        </authorList>
    </citation>
    <scope>NUCLEOTIDE SEQUENCE [LARGE SCALE GENOMIC DNA]</scope>
    <scope>GENOME REANNOTATION</scope>
    <source>
        <strain>ATCC BAA-935 / AF2122/97</strain>
    </source>
</reference>
<gene>
    <name type="primary">argR</name>
    <name type="synonym">ahrC</name>
    <name type="ordered locus">BQ2027_MB1685</name>
</gene>
<name>ARGR_MYCBO</name>
<sequence>MSRAKAAPVAGPEVAANRAGRQARIVAILSSAQVRSQNELAALLAAEGIEVTQATLSRDLEELGAVKLRGADGGTGIYVVPEDGSPVRGVSGGTDRMARLLGELLVSTDDSGNLAVLRTPPGAAHYLASAIDRAALPQVVGTIAGDDTILVVAREPTTGAQLAGMFENLR</sequence>
<evidence type="ECO:0000250" key="1"/>
<evidence type="ECO:0000305" key="2"/>
<feature type="chain" id="PRO_0000205101" description="Arginine repressor">
    <location>
        <begin position="1"/>
        <end position="170"/>
    </location>
</feature>
<organism>
    <name type="scientific">Mycobacterium bovis (strain ATCC BAA-935 / AF2122/97)</name>
    <dbReference type="NCBI Taxonomy" id="233413"/>
    <lineage>
        <taxon>Bacteria</taxon>
        <taxon>Bacillati</taxon>
        <taxon>Actinomycetota</taxon>
        <taxon>Actinomycetes</taxon>
        <taxon>Mycobacteriales</taxon>
        <taxon>Mycobacteriaceae</taxon>
        <taxon>Mycobacterium</taxon>
        <taxon>Mycobacterium tuberculosis complex</taxon>
    </lineage>
</organism>
<comment type="function">
    <text evidence="1">Regulates arginine biosynthesis genes.</text>
</comment>
<comment type="pathway">
    <text>Amino-acid biosynthesis; L-arginine biosynthesis [regulation].</text>
</comment>
<comment type="subcellular location">
    <subcellularLocation>
        <location evidence="1">Cytoplasm</location>
    </subcellularLocation>
</comment>
<comment type="similarity">
    <text evidence="2">Belongs to the ArgR family.</text>
</comment>
<keyword id="KW-0028">Amino-acid biosynthesis</keyword>
<keyword id="KW-0055">Arginine biosynthesis</keyword>
<keyword id="KW-0963">Cytoplasm</keyword>
<keyword id="KW-0238">DNA-binding</keyword>
<keyword id="KW-1185">Reference proteome</keyword>
<keyword id="KW-0678">Repressor</keyword>
<keyword id="KW-0804">Transcription</keyword>
<keyword id="KW-0805">Transcription regulation</keyword>
<accession>P0A4Y9</accession>
<accession>A0A1R3XYZ4</accession>
<accession>P94992</accession>
<accession>X2BIT5</accession>
<proteinExistence type="inferred from homology"/>